<protein>
    <recommendedName>
        <fullName evidence="1">UPF0145 protein CV_4322</fullName>
    </recommendedName>
</protein>
<gene>
    <name type="ordered locus">CV_4322</name>
</gene>
<feature type="chain" id="PRO_0000225820" description="UPF0145 protein CV_4322">
    <location>
        <begin position="1"/>
        <end position="117"/>
    </location>
</feature>
<accession>Q7NQ20</accession>
<reference key="1">
    <citation type="journal article" date="2003" name="Proc. Natl. Acad. Sci. U.S.A.">
        <title>The complete genome sequence of Chromobacterium violaceum reveals remarkable and exploitable bacterial adaptability.</title>
        <authorList>
            <person name="Vasconcelos A.T.R."/>
            <person name="de Almeida D.F."/>
            <person name="Hungria M."/>
            <person name="Guimaraes C.T."/>
            <person name="Antonio R.V."/>
            <person name="Almeida F.C."/>
            <person name="de Almeida L.G.P."/>
            <person name="de Almeida R."/>
            <person name="Alves-Gomes J.A."/>
            <person name="Andrade E.M."/>
            <person name="Araripe J."/>
            <person name="de Araujo M.F.F."/>
            <person name="Astolfi-Filho S."/>
            <person name="Azevedo V."/>
            <person name="Baptista A.J."/>
            <person name="Bataus L.A.M."/>
            <person name="Batista J.S."/>
            <person name="Belo A."/>
            <person name="van den Berg C."/>
            <person name="Bogo M."/>
            <person name="Bonatto S."/>
            <person name="Bordignon J."/>
            <person name="Brigido M.M."/>
            <person name="Brito C.A."/>
            <person name="Brocchi M."/>
            <person name="Burity H.A."/>
            <person name="Camargo A.A."/>
            <person name="Cardoso D.D.P."/>
            <person name="Carneiro N.P."/>
            <person name="Carraro D.M."/>
            <person name="Carvalho C.M.B."/>
            <person name="Cascardo J.C.M."/>
            <person name="Cavada B.S."/>
            <person name="Chueire L.M.O."/>
            <person name="Creczynski-Pasa T.B."/>
            <person name="Cunha-Junior N.C."/>
            <person name="Fagundes N."/>
            <person name="Falcao C.L."/>
            <person name="Fantinatti F."/>
            <person name="Farias I.P."/>
            <person name="Felipe M.S.S."/>
            <person name="Ferrari L.P."/>
            <person name="Ferro J.A."/>
            <person name="Ferro M.I.T."/>
            <person name="Franco G.R."/>
            <person name="Freitas N.S.A."/>
            <person name="Furlan L.R."/>
            <person name="Gazzinelli R.T."/>
            <person name="Gomes E.A."/>
            <person name="Goncalves P.R."/>
            <person name="Grangeiro T.B."/>
            <person name="Grattapaglia D."/>
            <person name="Grisard E.C."/>
            <person name="Hanna E.S."/>
            <person name="Jardim S.N."/>
            <person name="Laurino J."/>
            <person name="Leoi L.C.T."/>
            <person name="Lima L.F.A."/>
            <person name="Loureiro M.F."/>
            <person name="Lyra M.C.C.P."/>
            <person name="Madeira H.M.F."/>
            <person name="Manfio G.P."/>
            <person name="Maranhao A.Q."/>
            <person name="Martins W.S."/>
            <person name="di Mauro S.M.Z."/>
            <person name="de Medeiros S.R.B."/>
            <person name="Meissner R.V."/>
            <person name="Moreira M.A.M."/>
            <person name="Nascimento F.F."/>
            <person name="Nicolas M.F."/>
            <person name="Oliveira J.G."/>
            <person name="Oliveira S.C."/>
            <person name="Paixao R.F.C."/>
            <person name="Parente J.A."/>
            <person name="Pedrosa F.O."/>
            <person name="Pena S.D.J."/>
            <person name="Pereira J.O."/>
            <person name="Pereira M."/>
            <person name="Pinto L.S.R.C."/>
            <person name="Pinto L.S."/>
            <person name="Porto J.I.R."/>
            <person name="Potrich D.P."/>
            <person name="Ramalho-Neto C.E."/>
            <person name="Reis A.M.M."/>
            <person name="Rigo L.U."/>
            <person name="Rondinelli E."/>
            <person name="Santos E.B.P."/>
            <person name="Santos F.R."/>
            <person name="Schneider M.P.C."/>
            <person name="Seuanez H.N."/>
            <person name="Silva A.M.R."/>
            <person name="da Silva A.L.C."/>
            <person name="Silva D.W."/>
            <person name="Silva R."/>
            <person name="Simoes I.C."/>
            <person name="Simon D."/>
            <person name="Soares C.M.A."/>
            <person name="Soares R.B.A."/>
            <person name="Souza E.M."/>
            <person name="Souza K.R.L."/>
            <person name="Souza R.C."/>
            <person name="Steffens M.B.R."/>
            <person name="Steindel M."/>
            <person name="Teixeira S.R."/>
            <person name="Urmenyi T."/>
            <person name="Vettore A."/>
            <person name="Wassem R."/>
            <person name="Zaha A."/>
            <person name="Simpson A.J.G."/>
        </authorList>
    </citation>
    <scope>NUCLEOTIDE SEQUENCE [LARGE SCALE GENOMIC DNA]</scope>
    <source>
        <strain>ATCC 12472 / DSM 30191 / JCM 1249 / CCUG 213 / NBRC 12614 / NCIMB 9131 / NCTC 9757 / MK</strain>
    </source>
</reference>
<comment type="similarity">
    <text evidence="1">Belongs to the UPF0145 family.</text>
</comment>
<dbReference type="EMBL" id="AE016825">
    <property type="protein sequence ID" value="AAQ61981.1"/>
    <property type="molecule type" value="Genomic_DNA"/>
</dbReference>
<dbReference type="RefSeq" id="WP_011137868.1">
    <property type="nucleotide sequence ID" value="NC_005085.1"/>
</dbReference>
<dbReference type="SMR" id="Q7NQ20"/>
<dbReference type="STRING" id="243365.CV_4322"/>
<dbReference type="GeneID" id="66366195"/>
<dbReference type="KEGG" id="cvi:CV_4322"/>
<dbReference type="eggNOG" id="COG0393">
    <property type="taxonomic scope" value="Bacteria"/>
</dbReference>
<dbReference type="HOGENOM" id="CLU_117144_1_1_4"/>
<dbReference type="OrthoDB" id="9796448at2"/>
<dbReference type="Proteomes" id="UP000001424">
    <property type="component" value="Chromosome"/>
</dbReference>
<dbReference type="Gene3D" id="3.30.110.70">
    <property type="entry name" value="Hypothetical protein apc22750. Chain B"/>
    <property type="match status" value="1"/>
</dbReference>
<dbReference type="HAMAP" id="MF_00338">
    <property type="entry name" value="UPF0145"/>
    <property type="match status" value="1"/>
</dbReference>
<dbReference type="InterPro" id="IPR035439">
    <property type="entry name" value="UPF0145_dom_sf"/>
</dbReference>
<dbReference type="InterPro" id="IPR002765">
    <property type="entry name" value="UPF0145_YbjQ-like"/>
</dbReference>
<dbReference type="PANTHER" id="PTHR34068:SF2">
    <property type="entry name" value="UPF0145 PROTEIN SCO3412"/>
    <property type="match status" value="1"/>
</dbReference>
<dbReference type="PANTHER" id="PTHR34068">
    <property type="entry name" value="UPF0145 PROTEIN YBJQ"/>
    <property type="match status" value="1"/>
</dbReference>
<dbReference type="Pfam" id="PF01906">
    <property type="entry name" value="YbjQ_1"/>
    <property type="match status" value="1"/>
</dbReference>
<dbReference type="SUPFAM" id="SSF117782">
    <property type="entry name" value="YbjQ-like"/>
    <property type="match status" value="1"/>
</dbReference>
<evidence type="ECO:0000255" key="1">
    <source>
        <dbReference type="HAMAP-Rule" id="MF_00338"/>
    </source>
</evidence>
<organism>
    <name type="scientific">Chromobacterium violaceum (strain ATCC 12472 / DSM 30191 / JCM 1249 / CCUG 213 / NBRC 12614 / NCIMB 9131 / NCTC 9757 / MK)</name>
    <dbReference type="NCBI Taxonomy" id="243365"/>
    <lineage>
        <taxon>Bacteria</taxon>
        <taxon>Pseudomonadati</taxon>
        <taxon>Pseudomonadota</taxon>
        <taxon>Betaproteobacteria</taxon>
        <taxon>Neisseriales</taxon>
        <taxon>Chromobacteriaceae</taxon>
        <taxon>Chromobacterium</taxon>
    </lineage>
</organism>
<name>Y4322_CHRVO</name>
<proteinExistence type="inferred from homology"/>
<sequence>MLPAKMVTTAFELPGYRVSANLGVVRGITVRSRSLVGNFFGGLQSLFGGNITIYTSLCERARSETYAEMCQHAQALGADAVIGMRYDATEVMTGLTEVLCYGTAVKLEPLAGREPNP</sequence>
<keyword id="KW-1185">Reference proteome</keyword>